<proteinExistence type="inferred from homology"/>
<accession>Q4UZ74</accession>
<protein>
    <recommendedName>
        <fullName evidence="1">Putative NADH dehydrogenase/NAD(P)H nitroreductase XC_0568</fullName>
        <ecNumber evidence="1">1.-.-.-</ecNumber>
    </recommendedName>
</protein>
<name>Y568_XANC8</name>
<feature type="chain" id="PRO_1000066150" description="Putative NADH dehydrogenase/NAD(P)H nitroreductase XC_0568">
    <location>
        <begin position="1"/>
        <end position="196"/>
    </location>
</feature>
<evidence type="ECO:0000255" key="1">
    <source>
        <dbReference type="HAMAP-Rule" id="MF_01204"/>
    </source>
</evidence>
<dbReference type="EC" id="1.-.-.-" evidence="1"/>
<dbReference type="EMBL" id="CP000050">
    <property type="protein sequence ID" value="AAY47649.1"/>
    <property type="molecule type" value="Genomic_DNA"/>
</dbReference>
<dbReference type="RefSeq" id="WP_011038689.1">
    <property type="nucleotide sequence ID" value="NZ_CP155948.1"/>
</dbReference>
<dbReference type="SMR" id="Q4UZ74"/>
<dbReference type="KEGG" id="xcb:XC_0568"/>
<dbReference type="HOGENOM" id="CLU_084441_0_0_6"/>
<dbReference type="Proteomes" id="UP000000420">
    <property type="component" value="Chromosome"/>
</dbReference>
<dbReference type="GO" id="GO:0016491">
    <property type="term" value="F:oxidoreductase activity"/>
    <property type="evidence" value="ECO:0007669"/>
    <property type="project" value="UniProtKB-UniRule"/>
</dbReference>
<dbReference type="CDD" id="cd02148">
    <property type="entry name" value="RutE-like"/>
    <property type="match status" value="1"/>
</dbReference>
<dbReference type="Gene3D" id="3.40.109.10">
    <property type="entry name" value="NADH Oxidase"/>
    <property type="match status" value="1"/>
</dbReference>
<dbReference type="HAMAP" id="MF_01204">
    <property type="entry name" value="Oxidoreductase_RutE_HadB"/>
    <property type="match status" value="1"/>
</dbReference>
<dbReference type="InterPro" id="IPR029479">
    <property type="entry name" value="Nitroreductase"/>
</dbReference>
<dbReference type="InterPro" id="IPR000415">
    <property type="entry name" value="Nitroreductase-like"/>
</dbReference>
<dbReference type="InterPro" id="IPR050461">
    <property type="entry name" value="Nitroreductase_HadB/RutE"/>
</dbReference>
<dbReference type="InterPro" id="IPR023936">
    <property type="entry name" value="RutE-like"/>
</dbReference>
<dbReference type="NCBIfam" id="NF003768">
    <property type="entry name" value="PRK05365.1"/>
    <property type="match status" value="1"/>
</dbReference>
<dbReference type="PANTHER" id="PTHR43543">
    <property type="entry name" value="MALONIC SEMIALDEHYDE REDUCTASE RUTE-RELATED"/>
    <property type="match status" value="1"/>
</dbReference>
<dbReference type="PANTHER" id="PTHR43543:SF1">
    <property type="entry name" value="MALONIC SEMIALDEHYDE REDUCTASE RUTE-RELATED"/>
    <property type="match status" value="1"/>
</dbReference>
<dbReference type="Pfam" id="PF00881">
    <property type="entry name" value="Nitroreductase"/>
    <property type="match status" value="1"/>
</dbReference>
<dbReference type="SUPFAM" id="SSF55469">
    <property type="entry name" value="FMN-dependent nitroreductase-like"/>
    <property type="match status" value="1"/>
</dbReference>
<keyword id="KW-0285">Flavoprotein</keyword>
<keyword id="KW-0288">FMN</keyword>
<keyword id="KW-0520">NAD</keyword>
<keyword id="KW-0521">NADP</keyword>
<keyword id="KW-0560">Oxidoreductase</keyword>
<reference key="1">
    <citation type="journal article" date="2005" name="Genome Res.">
        <title>Comparative and functional genomic analyses of the pathogenicity of phytopathogen Xanthomonas campestris pv. campestris.</title>
        <authorList>
            <person name="Qian W."/>
            <person name="Jia Y."/>
            <person name="Ren S.-X."/>
            <person name="He Y.-Q."/>
            <person name="Feng J.-X."/>
            <person name="Lu L.-F."/>
            <person name="Sun Q."/>
            <person name="Ying G."/>
            <person name="Tang D.-J."/>
            <person name="Tang H."/>
            <person name="Wu W."/>
            <person name="Hao P."/>
            <person name="Wang L."/>
            <person name="Jiang B.-L."/>
            <person name="Zeng S."/>
            <person name="Gu W.-Y."/>
            <person name="Lu G."/>
            <person name="Rong L."/>
            <person name="Tian Y."/>
            <person name="Yao Z."/>
            <person name="Fu G."/>
            <person name="Chen B."/>
            <person name="Fang R."/>
            <person name="Qiang B."/>
            <person name="Chen Z."/>
            <person name="Zhao G.-P."/>
            <person name="Tang J.-L."/>
            <person name="He C."/>
        </authorList>
    </citation>
    <scope>NUCLEOTIDE SEQUENCE [LARGE SCALE GENOMIC DNA]</scope>
    <source>
        <strain>8004</strain>
    </source>
</reference>
<comment type="cofactor">
    <cofactor evidence="1">
        <name>FMN</name>
        <dbReference type="ChEBI" id="CHEBI:58210"/>
    </cofactor>
</comment>
<comment type="similarity">
    <text evidence="1">Belongs to the nitroreductase family. HadB/RutE subfamily.</text>
</comment>
<gene>
    <name type="ordered locus">XC_0568</name>
</gene>
<sequence>MSDLLNAAALDQLFRTARTQNAFLDTPVSEDLLRELYDLVKWGPTAANGSPARFVFVTTAEGKEKLKPALSEGNAAKTLAAPVTAIIGFDEDFHEKLPYLFPHADAKSWFDGPRTARTESAFRNSSLQGAYLILAARALGLDAGPMSGFDNAKVDAAFFAGTPIKSNFLVNLGYGDPAGLFPRLPRLSFDEAARIA</sequence>
<organism>
    <name type="scientific">Xanthomonas campestris pv. campestris (strain 8004)</name>
    <dbReference type="NCBI Taxonomy" id="314565"/>
    <lineage>
        <taxon>Bacteria</taxon>
        <taxon>Pseudomonadati</taxon>
        <taxon>Pseudomonadota</taxon>
        <taxon>Gammaproteobacteria</taxon>
        <taxon>Lysobacterales</taxon>
        <taxon>Lysobacteraceae</taxon>
        <taxon>Xanthomonas</taxon>
    </lineage>
</organism>